<feature type="chain" id="PRO_1000166389" description="Large ribosomal subunit protein uL16">
    <location>
        <begin position="1"/>
        <end position="136"/>
    </location>
</feature>
<dbReference type="EMBL" id="CP001233">
    <property type="protein sequence ID" value="ACP06806.1"/>
    <property type="molecule type" value="Genomic_DNA"/>
</dbReference>
<dbReference type="RefSeq" id="WP_000941219.1">
    <property type="nucleotide sequence ID" value="NC_012578.1"/>
</dbReference>
<dbReference type="SMR" id="C3LRQ1"/>
<dbReference type="GeneID" id="69718807"/>
<dbReference type="KEGG" id="vcm:VCM66_2509"/>
<dbReference type="HOGENOM" id="CLU_078858_2_1_6"/>
<dbReference type="Proteomes" id="UP000001217">
    <property type="component" value="Chromosome I"/>
</dbReference>
<dbReference type="GO" id="GO:0022625">
    <property type="term" value="C:cytosolic large ribosomal subunit"/>
    <property type="evidence" value="ECO:0007669"/>
    <property type="project" value="TreeGrafter"/>
</dbReference>
<dbReference type="GO" id="GO:0019843">
    <property type="term" value="F:rRNA binding"/>
    <property type="evidence" value="ECO:0007669"/>
    <property type="project" value="UniProtKB-UniRule"/>
</dbReference>
<dbReference type="GO" id="GO:0003735">
    <property type="term" value="F:structural constituent of ribosome"/>
    <property type="evidence" value="ECO:0007669"/>
    <property type="project" value="InterPro"/>
</dbReference>
<dbReference type="GO" id="GO:0000049">
    <property type="term" value="F:tRNA binding"/>
    <property type="evidence" value="ECO:0007669"/>
    <property type="project" value="UniProtKB-KW"/>
</dbReference>
<dbReference type="GO" id="GO:0006412">
    <property type="term" value="P:translation"/>
    <property type="evidence" value="ECO:0007669"/>
    <property type="project" value="UniProtKB-UniRule"/>
</dbReference>
<dbReference type="CDD" id="cd01433">
    <property type="entry name" value="Ribosomal_L16_L10e"/>
    <property type="match status" value="1"/>
</dbReference>
<dbReference type="FunFam" id="3.90.1170.10:FF:000001">
    <property type="entry name" value="50S ribosomal protein L16"/>
    <property type="match status" value="1"/>
</dbReference>
<dbReference type="Gene3D" id="3.90.1170.10">
    <property type="entry name" value="Ribosomal protein L10e/L16"/>
    <property type="match status" value="1"/>
</dbReference>
<dbReference type="HAMAP" id="MF_01342">
    <property type="entry name" value="Ribosomal_uL16"/>
    <property type="match status" value="1"/>
</dbReference>
<dbReference type="InterPro" id="IPR047873">
    <property type="entry name" value="Ribosomal_uL16"/>
</dbReference>
<dbReference type="InterPro" id="IPR000114">
    <property type="entry name" value="Ribosomal_uL16_bact-type"/>
</dbReference>
<dbReference type="InterPro" id="IPR020798">
    <property type="entry name" value="Ribosomal_uL16_CS"/>
</dbReference>
<dbReference type="InterPro" id="IPR016180">
    <property type="entry name" value="Ribosomal_uL16_dom"/>
</dbReference>
<dbReference type="InterPro" id="IPR036920">
    <property type="entry name" value="Ribosomal_uL16_sf"/>
</dbReference>
<dbReference type="NCBIfam" id="TIGR01164">
    <property type="entry name" value="rplP_bact"/>
    <property type="match status" value="1"/>
</dbReference>
<dbReference type="PANTHER" id="PTHR12220">
    <property type="entry name" value="50S/60S RIBOSOMAL PROTEIN L16"/>
    <property type="match status" value="1"/>
</dbReference>
<dbReference type="PANTHER" id="PTHR12220:SF13">
    <property type="entry name" value="LARGE RIBOSOMAL SUBUNIT PROTEIN UL16M"/>
    <property type="match status" value="1"/>
</dbReference>
<dbReference type="Pfam" id="PF00252">
    <property type="entry name" value="Ribosomal_L16"/>
    <property type="match status" value="1"/>
</dbReference>
<dbReference type="PRINTS" id="PR00060">
    <property type="entry name" value="RIBOSOMALL16"/>
</dbReference>
<dbReference type="SUPFAM" id="SSF54686">
    <property type="entry name" value="Ribosomal protein L16p/L10e"/>
    <property type="match status" value="1"/>
</dbReference>
<dbReference type="PROSITE" id="PS00586">
    <property type="entry name" value="RIBOSOMAL_L16_1"/>
    <property type="match status" value="1"/>
</dbReference>
<comment type="function">
    <text evidence="1">Binds 23S rRNA and is also seen to make contacts with the A and possibly P site tRNAs.</text>
</comment>
<comment type="subunit">
    <text evidence="1">Part of the 50S ribosomal subunit.</text>
</comment>
<comment type="similarity">
    <text evidence="1">Belongs to the universal ribosomal protein uL16 family.</text>
</comment>
<reference key="1">
    <citation type="journal article" date="2008" name="PLoS ONE">
        <title>A recalibrated molecular clock and independent origins for the cholera pandemic clones.</title>
        <authorList>
            <person name="Feng L."/>
            <person name="Reeves P.R."/>
            <person name="Lan R."/>
            <person name="Ren Y."/>
            <person name="Gao C."/>
            <person name="Zhou Z."/>
            <person name="Ren Y."/>
            <person name="Cheng J."/>
            <person name="Wang W."/>
            <person name="Wang J."/>
            <person name="Qian W."/>
            <person name="Li D."/>
            <person name="Wang L."/>
        </authorList>
    </citation>
    <scope>NUCLEOTIDE SEQUENCE [LARGE SCALE GENOMIC DNA]</scope>
    <source>
        <strain>M66-2</strain>
    </source>
</reference>
<protein>
    <recommendedName>
        <fullName evidence="1">Large ribosomal subunit protein uL16</fullName>
    </recommendedName>
    <alternativeName>
        <fullName evidence="2">50S ribosomal protein L16</fullName>
    </alternativeName>
</protein>
<gene>
    <name evidence="1" type="primary">rplP</name>
    <name type="ordered locus">VCM66_2509</name>
</gene>
<evidence type="ECO:0000255" key="1">
    <source>
        <dbReference type="HAMAP-Rule" id="MF_01342"/>
    </source>
</evidence>
<evidence type="ECO:0000305" key="2"/>
<accession>C3LRQ1</accession>
<organism>
    <name type="scientific">Vibrio cholerae serotype O1 (strain M66-2)</name>
    <dbReference type="NCBI Taxonomy" id="579112"/>
    <lineage>
        <taxon>Bacteria</taxon>
        <taxon>Pseudomonadati</taxon>
        <taxon>Pseudomonadota</taxon>
        <taxon>Gammaproteobacteria</taxon>
        <taxon>Vibrionales</taxon>
        <taxon>Vibrionaceae</taxon>
        <taxon>Vibrio</taxon>
    </lineage>
</organism>
<proteinExistence type="inferred from homology"/>
<keyword id="KW-0687">Ribonucleoprotein</keyword>
<keyword id="KW-0689">Ribosomal protein</keyword>
<keyword id="KW-0694">RNA-binding</keyword>
<keyword id="KW-0699">rRNA-binding</keyword>
<keyword id="KW-0820">tRNA-binding</keyword>
<name>RL16_VIBCM</name>
<sequence>MLQPKRTKFRKVQTGRNRGLAKGTEVSFGTFGLKAVGRGRLTARQIEAARRAMTRHIKRQGKIWIRVFPDKPITEKPLEVRQGKGKGNVEYWVAQIQPGKVMYEVDGVPEELAREAFRLAARKLPFKTTFVTKQVM</sequence>